<gene>
    <name evidence="1" type="primary">groEL2</name>
    <name evidence="1" type="synonym">groL2</name>
    <name type="ordered locus">PPA1772</name>
</gene>
<name>CH602_CUTAK</name>
<comment type="function">
    <text evidence="1">Together with its co-chaperonin GroES, plays an essential role in assisting protein folding. The GroEL-GroES system forms a nano-cage that allows encapsulation of the non-native substrate proteins and provides a physical environment optimized to promote and accelerate protein folding.</text>
</comment>
<comment type="catalytic activity">
    <reaction evidence="1">
        <text>ATP + H2O + a folded polypeptide = ADP + phosphate + an unfolded polypeptide.</text>
        <dbReference type="EC" id="5.6.1.7"/>
    </reaction>
</comment>
<comment type="subunit">
    <text evidence="1">Forms a cylinder of 14 subunits composed of two heptameric rings stacked back-to-back. Interacts with the co-chaperonin GroES.</text>
</comment>
<comment type="subcellular location">
    <subcellularLocation>
        <location evidence="1">Cytoplasm</location>
    </subcellularLocation>
</comment>
<comment type="similarity">
    <text evidence="1">Belongs to the chaperonin (HSP60) family.</text>
</comment>
<feature type="chain" id="PRO_0000063479" description="Chaperonin GroEL 2">
    <location>
        <begin position="1"/>
        <end position="531"/>
    </location>
</feature>
<feature type="binding site" evidence="1">
    <location>
        <begin position="30"/>
        <end position="33"/>
    </location>
    <ligand>
        <name>ATP</name>
        <dbReference type="ChEBI" id="CHEBI:30616"/>
    </ligand>
</feature>
<feature type="binding site" evidence="1">
    <location>
        <begin position="87"/>
        <end position="91"/>
    </location>
    <ligand>
        <name>ATP</name>
        <dbReference type="ChEBI" id="CHEBI:30616"/>
    </ligand>
</feature>
<feature type="binding site" evidence="1">
    <location>
        <position position="414"/>
    </location>
    <ligand>
        <name>ATP</name>
        <dbReference type="ChEBI" id="CHEBI:30616"/>
    </ligand>
</feature>
<feature type="binding site" evidence="1">
    <location>
        <position position="494"/>
    </location>
    <ligand>
        <name>ATP</name>
        <dbReference type="ChEBI" id="CHEBI:30616"/>
    </ligand>
</feature>
<organism>
    <name type="scientific">Cutibacterium acnes (strain DSM 16379 / KPA171202)</name>
    <name type="common">Propionibacterium acnes</name>
    <dbReference type="NCBI Taxonomy" id="267747"/>
    <lineage>
        <taxon>Bacteria</taxon>
        <taxon>Bacillati</taxon>
        <taxon>Actinomycetota</taxon>
        <taxon>Actinomycetes</taxon>
        <taxon>Propionibacteriales</taxon>
        <taxon>Propionibacteriaceae</taxon>
        <taxon>Cutibacterium</taxon>
    </lineage>
</organism>
<accession>Q6A6W2</accession>
<evidence type="ECO:0000255" key="1">
    <source>
        <dbReference type="HAMAP-Rule" id="MF_00600"/>
    </source>
</evidence>
<sequence>MAAKQLQFDEEARRSLERGVDTLADTVKVTLGPKGRYVVLDKKWGAPTITNDGVTVAKEVDLTDPYENLGAQLAKEVATKTNDVAGDGTTTATVLAQALVHEGLRAVASGANPVGLKRGIEKAVDAVVEELRSISRAIDTTSDMASVATISSRDETIGALIAEAFDKVGKDGVITVDESQTFGTELDFTEGMQFDKGYLSPYMVTDQDRMEAVIEDPYILIHSGKISSMNDLLPLLEKVIAAHGSLFIVAEDVDGEALSTLVVNKIRGTFSSVAVKAPAFGDRRKAMLQDIATLTGGQVVAPEVGLKLDQVGLEVLGRAKKVVVTKDNTTIVDGAGDKADVEGRVIQLRAEYDNSDSEWDREKLQERIAKLAGGVCVIRVGAATEVELNEKKHRIEDAVSATRAAIEEGIVAGGGSALIHAAHVLDGDLHLEGDEKAGVQIVAKAVREPLRWIAENGGEPGYVIVSKVAEMEPGHGYNGKTGQYVDLIADGVIDPLKVTRSALANAASIASLLLTTETLVVDKPEEDNEDK</sequence>
<proteinExistence type="inferred from homology"/>
<reference key="1">
    <citation type="journal article" date="2004" name="Science">
        <title>The complete genome sequence of Propionibacterium acnes, a commensal of human skin.</title>
        <authorList>
            <person name="Brueggemann H."/>
            <person name="Henne A."/>
            <person name="Hoster F."/>
            <person name="Liesegang H."/>
            <person name="Wiezer A."/>
            <person name="Strittmatter A."/>
            <person name="Hujer S."/>
            <person name="Duerre P."/>
            <person name="Gottschalk G."/>
        </authorList>
    </citation>
    <scope>NUCLEOTIDE SEQUENCE [LARGE SCALE GENOMIC DNA]</scope>
    <source>
        <strain>DSM 16379 / KPA171202</strain>
    </source>
</reference>
<protein>
    <recommendedName>
        <fullName evidence="1">Chaperonin GroEL 2</fullName>
        <ecNumber evidence="1">5.6.1.7</ecNumber>
    </recommendedName>
    <alternativeName>
        <fullName evidence="1">60 kDa chaperonin 2</fullName>
    </alternativeName>
    <alternativeName>
        <fullName evidence="1">Chaperonin-60 2</fullName>
        <shortName evidence="1">Cpn60 2</shortName>
    </alternativeName>
</protein>
<keyword id="KW-0067">ATP-binding</keyword>
<keyword id="KW-0143">Chaperone</keyword>
<keyword id="KW-0963">Cytoplasm</keyword>
<keyword id="KW-0413">Isomerase</keyword>
<keyword id="KW-0547">Nucleotide-binding</keyword>
<dbReference type="EC" id="5.6.1.7" evidence="1"/>
<dbReference type="EMBL" id="AE017283">
    <property type="protein sequence ID" value="AAT83501.1"/>
    <property type="molecule type" value="Genomic_DNA"/>
</dbReference>
<dbReference type="SMR" id="Q6A6W2"/>
<dbReference type="EnsemblBacteria" id="AAT83501">
    <property type="protein sequence ID" value="AAT83501"/>
    <property type="gene ID" value="PPA1772"/>
</dbReference>
<dbReference type="KEGG" id="pac:PPA1772"/>
<dbReference type="eggNOG" id="COG0459">
    <property type="taxonomic scope" value="Bacteria"/>
</dbReference>
<dbReference type="HOGENOM" id="CLU_016503_3_0_11"/>
<dbReference type="Proteomes" id="UP000000603">
    <property type="component" value="Chromosome"/>
</dbReference>
<dbReference type="GO" id="GO:0005737">
    <property type="term" value="C:cytoplasm"/>
    <property type="evidence" value="ECO:0007669"/>
    <property type="project" value="UniProtKB-SubCell"/>
</dbReference>
<dbReference type="GO" id="GO:0005524">
    <property type="term" value="F:ATP binding"/>
    <property type="evidence" value="ECO:0007669"/>
    <property type="project" value="UniProtKB-UniRule"/>
</dbReference>
<dbReference type="GO" id="GO:0140662">
    <property type="term" value="F:ATP-dependent protein folding chaperone"/>
    <property type="evidence" value="ECO:0007669"/>
    <property type="project" value="InterPro"/>
</dbReference>
<dbReference type="GO" id="GO:0016853">
    <property type="term" value="F:isomerase activity"/>
    <property type="evidence" value="ECO:0007669"/>
    <property type="project" value="UniProtKB-KW"/>
</dbReference>
<dbReference type="GO" id="GO:0051082">
    <property type="term" value="F:unfolded protein binding"/>
    <property type="evidence" value="ECO:0007669"/>
    <property type="project" value="UniProtKB-UniRule"/>
</dbReference>
<dbReference type="GO" id="GO:0042026">
    <property type="term" value="P:protein refolding"/>
    <property type="evidence" value="ECO:0007669"/>
    <property type="project" value="UniProtKB-UniRule"/>
</dbReference>
<dbReference type="CDD" id="cd03344">
    <property type="entry name" value="GroEL"/>
    <property type="match status" value="1"/>
</dbReference>
<dbReference type="FunFam" id="3.50.7.10:FF:000001">
    <property type="entry name" value="60 kDa chaperonin"/>
    <property type="match status" value="1"/>
</dbReference>
<dbReference type="Gene3D" id="3.50.7.10">
    <property type="entry name" value="GroEL"/>
    <property type="match status" value="1"/>
</dbReference>
<dbReference type="Gene3D" id="1.10.560.10">
    <property type="entry name" value="GroEL-like equatorial domain"/>
    <property type="match status" value="1"/>
</dbReference>
<dbReference type="Gene3D" id="3.30.260.10">
    <property type="entry name" value="TCP-1-like chaperonin intermediate domain"/>
    <property type="match status" value="1"/>
</dbReference>
<dbReference type="HAMAP" id="MF_00600">
    <property type="entry name" value="CH60"/>
    <property type="match status" value="1"/>
</dbReference>
<dbReference type="InterPro" id="IPR018370">
    <property type="entry name" value="Chaperonin_Cpn60_CS"/>
</dbReference>
<dbReference type="InterPro" id="IPR001844">
    <property type="entry name" value="Cpn60/GroEL"/>
</dbReference>
<dbReference type="InterPro" id="IPR002423">
    <property type="entry name" value="Cpn60/GroEL/TCP-1"/>
</dbReference>
<dbReference type="InterPro" id="IPR027409">
    <property type="entry name" value="GroEL-like_apical_dom_sf"/>
</dbReference>
<dbReference type="InterPro" id="IPR027413">
    <property type="entry name" value="GROEL-like_equatorial_sf"/>
</dbReference>
<dbReference type="InterPro" id="IPR027410">
    <property type="entry name" value="TCP-1-like_intermed_sf"/>
</dbReference>
<dbReference type="NCBIfam" id="TIGR02348">
    <property type="entry name" value="GroEL"/>
    <property type="match status" value="1"/>
</dbReference>
<dbReference type="NCBIfam" id="NF000592">
    <property type="entry name" value="PRK00013.1"/>
    <property type="match status" value="1"/>
</dbReference>
<dbReference type="NCBIfam" id="NF009487">
    <property type="entry name" value="PRK12849.1"/>
    <property type="match status" value="1"/>
</dbReference>
<dbReference type="NCBIfam" id="NF009488">
    <property type="entry name" value="PRK12850.1"/>
    <property type="match status" value="1"/>
</dbReference>
<dbReference type="NCBIfam" id="NF009489">
    <property type="entry name" value="PRK12851.1"/>
    <property type="match status" value="1"/>
</dbReference>
<dbReference type="PANTHER" id="PTHR45633">
    <property type="entry name" value="60 KDA HEAT SHOCK PROTEIN, MITOCHONDRIAL"/>
    <property type="match status" value="1"/>
</dbReference>
<dbReference type="Pfam" id="PF00118">
    <property type="entry name" value="Cpn60_TCP1"/>
    <property type="match status" value="1"/>
</dbReference>
<dbReference type="PRINTS" id="PR00298">
    <property type="entry name" value="CHAPERONIN60"/>
</dbReference>
<dbReference type="SUPFAM" id="SSF52029">
    <property type="entry name" value="GroEL apical domain-like"/>
    <property type="match status" value="1"/>
</dbReference>
<dbReference type="SUPFAM" id="SSF48592">
    <property type="entry name" value="GroEL equatorial domain-like"/>
    <property type="match status" value="1"/>
</dbReference>
<dbReference type="SUPFAM" id="SSF54849">
    <property type="entry name" value="GroEL-intermediate domain like"/>
    <property type="match status" value="1"/>
</dbReference>
<dbReference type="PROSITE" id="PS00296">
    <property type="entry name" value="CHAPERONINS_CPN60"/>
    <property type="match status" value="1"/>
</dbReference>